<feature type="chain" id="PRO_1000098559" description="Threonine--tRNA ligase">
    <location>
        <begin position="1"/>
        <end position="635"/>
    </location>
</feature>
<feature type="domain" description="TGS" evidence="2">
    <location>
        <begin position="1"/>
        <end position="58"/>
    </location>
</feature>
<feature type="region of interest" description="Catalytic" evidence="1">
    <location>
        <begin position="237"/>
        <end position="528"/>
    </location>
</feature>
<feature type="binding site" evidence="1">
    <location>
        <position position="328"/>
    </location>
    <ligand>
        <name>Zn(2+)</name>
        <dbReference type="ChEBI" id="CHEBI:29105"/>
    </ligand>
</feature>
<feature type="binding site" evidence="1">
    <location>
        <position position="379"/>
    </location>
    <ligand>
        <name>Zn(2+)</name>
        <dbReference type="ChEBI" id="CHEBI:29105"/>
    </ligand>
</feature>
<feature type="binding site" evidence="1">
    <location>
        <position position="505"/>
    </location>
    <ligand>
        <name>Zn(2+)</name>
        <dbReference type="ChEBI" id="CHEBI:29105"/>
    </ligand>
</feature>
<organism>
    <name type="scientific">Chlamydia trachomatis serovar L2b (strain UCH-1/proctitis)</name>
    <dbReference type="NCBI Taxonomy" id="471473"/>
    <lineage>
        <taxon>Bacteria</taxon>
        <taxon>Pseudomonadati</taxon>
        <taxon>Chlamydiota</taxon>
        <taxon>Chlamydiia</taxon>
        <taxon>Chlamydiales</taxon>
        <taxon>Chlamydiaceae</taxon>
        <taxon>Chlamydia/Chlamydophila group</taxon>
        <taxon>Chlamydia</taxon>
    </lineage>
</organism>
<reference key="1">
    <citation type="journal article" date="2008" name="Genome Res.">
        <title>Chlamydia trachomatis: genome sequence analysis of lymphogranuloma venereum isolates.</title>
        <authorList>
            <person name="Thomson N.R."/>
            <person name="Holden M.T.G."/>
            <person name="Carder C."/>
            <person name="Lennard N."/>
            <person name="Lockey S.J."/>
            <person name="Marsh P."/>
            <person name="Skipp P."/>
            <person name="O'Connor C.D."/>
            <person name="Goodhead I."/>
            <person name="Norbertzcak H."/>
            <person name="Harris B."/>
            <person name="Ormond D."/>
            <person name="Rance R."/>
            <person name="Quail M.A."/>
            <person name="Parkhill J."/>
            <person name="Stephens R.S."/>
            <person name="Clarke I.N."/>
        </authorList>
    </citation>
    <scope>NUCLEOTIDE SEQUENCE [LARGE SCALE GENOMIC DNA]</scope>
    <source>
        <strain>UCH-1/proctitis</strain>
    </source>
</reference>
<proteinExistence type="inferred from homology"/>
<gene>
    <name evidence="1" type="primary">thrS</name>
    <name type="ordered locus">CTLon_0838</name>
</gene>
<sequence length="635" mass="72630">MIHVTCNQEAFELPEGASAMDLANKMKQSHCFVGALINDQEKDLSTTLQDGDTVLFLTWDDPKGREIFLHTSAHILAQAVLRLWPSAQPTIGPVIDQGFYYDFANLSISEEDFPAIEAMAKTIAEEKFPISRQVFPDKEAALAYFSQNPFKAELIAELPEEVEISAYTQGEFLDLCRGPHLPSTAPVKAFKLLRTSSAYWKGDPSRESLIRIYGVSFPTTKELKEHLHQLEEAKKRDHRVLGTKLDLFSQQTCSAGMPFFHPRGMVVWNALVDYWKRLHQRAGYQQIQTPQLMNRELWEISGHWENYKENMYTLTVDEEDYAIKPMNCPGCMLYYKTQLHSYREFPLRIAEIGHVHRHELSGALSGLMRVRTFHQDDAHVFLTPEQVEEETLNILNLVSELYGTFGLEYHLELSTRPEQGTIGSDDLWELATEALKRALVKSQKPFIISPGEGAFYGPKIDIHVKDAINRTWQCGTIQLDMFLPERFDLKYTNAQGEKSTPIMLHRALFGSIERFLGILIEHFKGRFPLWLSPEHVRIITVADRHEARAQELAKHFSQMGIIVSVDSSNESVSKKIRNAQNMQVNYMITIGDKELETHLLAVRTRDNRVLNDIAVEQFSHVILEELRSLSLTPSL</sequence>
<protein>
    <recommendedName>
        <fullName evidence="1">Threonine--tRNA ligase</fullName>
        <ecNumber evidence="1">6.1.1.3</ecNumber>
    </recommendedName>
    <alternativeName>
        <fullName evidence="1">Threonyl-tRNA synthetase</fullName>
        <shortName evidence="1">ThrRS</shortName>
    </alternativeName>
</protein>
<name>SYT_CHLTB</name>
<evidence type="ECO:0000255" key="1">
    <source>
        <dbReference type="HAMAP-Rule" id="MF_00184"/>
    </source>
</evidence>
<evidence type="ECO:0000255" key="2">
    <source>
        <dbReference type="PROSITE-ProRule" id="PRU01228"/>
    </source>
</evidence>
<accession>B0BA34</accession>
<dbReference type="EC" id="6.1.1.3" evidence="1"/>
<dbReference type="EMBL" id="AM884177">
    <property type="protein sequence ID" value="CAP07235.1"/>
    <property type="molecule type" value="Genomic_DNA"/>
</dbReference>
<dbReference type="RefSeq" id="WP_009873916.1">
    <property type="nucleotide sequence ID" value="NC_010280.2"/>
</dbReference>
<dbReference type="SMR" id="B0BA34"/>
<dbReference type="KEGG" id="ctl:CTLon_0838"/>
<dbReference type="HOGENOM" id="CLU_008554_0_1_0"/>
<dbReference type="Proteomes" id="UP001154401">
    <property type="component" value="Chromosome"/>
</dbReference>
<dbReference type="GO" id="GO:0005737">
    <property type="term" value="C:cytoplasm"/>
    <property type="evidence" value="ECO:0007669"/>
    <property type="project" value="UniProtKB-SubCell"/>
</dbReference>
<dbReference type="GO" id="GO:0005524">
    <property type="term" value="F:ATP binding"/>
    <property type="evidence" value="ECO:0007669"/>
    <property type="project" value="UniProtKB-UniRule"/>
</dbReference>
<dbReference type="GO" id="GO:0046872">
    <property type="term" value="F:metal ion binding"/>
    <property type="evidence" value="ECO:0007669"/>
    <property type="project" value="UniProtKB-KW"/>
</dbReference>
<dbReference type="GO" id="GO:0004829">
    <property type="term" value="F:threonine-tRNA ligase activity"/>
    <property type="evidence" value="ECO:0007669"/>
    <property type="project" value="UniProtKB-UniRule"/>
</dbReference>
<dbReference type="GO" id="GO:0000049">
    <property type="term" value="F:tRNA binding"/>
    <property type="evidence" value="ECO:0007669"/>
    <property type="project" value="UniProtKB-KW"/>
</dbReference>
<dbReference type="GO" id="GO:0006435">
    <property type="term" value="P:threonyl-tRNA aminoacylation"/>
    <property type="evidence" value="ECO:0007669"/>
    <property type="project" value="UniProtKB-UniRule"/>
</dbReference>
<dbReference type="CDD" id="cd00860">
    <property type="entry name" value="ThrRS_anticodon"/>
    <property type="match status" value="1"/>
</dbReference>
<dbReference type="CDD" id="cd00771">
    <property type="entry name" value="ThrRS_core"/>
    <property type="match status" value="1"/>
</dbReference>
<dbReference type="FunFam" id="3.30.930.10:FF:000019">
    <property type="entry name" value="Threonine--tRNA ligase"/>
    <property type="match status" value="1"/>
</dbReference>
<dbReference type="FunFam" id="3.40.50.800:FF:000001">
    <property type="entry name" value="Threonine--tRNA ligase"/>
    <property type="match status" value="1"/>
</dbReference>
<dbReference type="FunFam" id="3.30.980.10:FF:000005">
    <property type="entry name" value="Threonyl-tRNA synthetase, mitochondrial"/>
    <property type="match status" value="1"/>
</dbReference>
<dbReference type="Gene3D" id="3.10.20.30">
    <property type="match status" value="1"/>
</dbReference>
<dbReference type="Gene3D" id="3.30.54.20">
    <property type="match status" value="1"/>
</dbReference>
<dbReference type="Gene3D" id="3.40.50.800">
    <property type="entry name" value="Anticodon-binding domain"/>
    <property type="match status" value="1"/>
</dbReference>
<dbReference type="Gene3D" id="3.30.930.10">
    <property type="entry name" value="Bira Bifunctional Protein, Domain 2"/>
    <property type="match status" value="1"/>
</dbReference>
<dbReference type="Gene3D" id="3.30.980.10">
    <property type="entry name" value="Threonyl-trna Synthetase, Chain A, domain 2"/>
    <property type="match status" value="1"/>
</dbReference>
<dbReference type="HAMAP" id="MF_00184">
    <property type="entry name" value="Thr_tRNA_synth"/>
    <property type="match status" value="1"/>
</dbReference>
<dbReference type="InterPro" id="IPR002314">
    <property type="entry name" value="aa-tRNA-synt_IIb"/>
</dbReference>
<dbReference type="InterPro" id="IPR006195">
    <property type="entry name" value="aa-tRNA-synth_II"/>
</dbReference>
<dbReference type="InterPro" id="IPR045864">
    <property type="entry name" value="aa-tRNA-synth_II/BPL/LPL"/>
</dbReference>
<dbReference type="InterPro" id="IPR004154">
    <property type="entry name" value="Anticodon-bd"/>
</dbReference>
<dbReference type="InterPro" id="IPR036621">
    <property type="entry name" value="Anticodon-bd_dom_sf"/>
</dbReference>
<dbReference type="InterPro" id="IPR012675">
    <property type="entry name" value="Beta-grasp_dom_sf"/>
</dbReference>
<dbReference type="InterPro" id="IPR004095">
    <property type="entry name" value="TGS"/>
</dbReference>
<dbReference type="InterPro" id="IPR002320">
    <property type="entry name" value="Thr-tRNA-ligase_IIa"/>
</dbReference>
<dbReference type="InterPro" id="IPR018163">
    <property type="entry name" value="Thr/Ala-tRNA-synth_IIc_edit"/>
</dbReference>
<dbReference type="InterPro" id="IPR047246">
    <property type="entry name" value="ThrRS_anticodon"/>
</dbReference>
<dbReference type="InterPro" id="IPR033728">
    <property type="entry name" value="ThrRS_core"/>
</dbReference>
<dbReference type="InterPro" id="IPR012947">
    <property type="entry name" value="tRNA_SAD"/>
</dbReference>
<dbReference type="NCBIfam" id="TIGR00418">
    <property type="entry name" value="thrS"/>
    <property type="match status" value="1"/>
</dbReference>
<dbReference type="PANTHER" id="PTHR11451:SF44">
    <property type="entry name" value="THREONINE--TRNA LIGASE, CHLOROPLASTIC_MITOCHONDRIAL 2"/>
    <property type="match status" value="1"/>
</dbReference>
<dbReference type="PANTHER" id="PTHR11451">
    <property type="entry name" value="THREONINE-TRNA LIGASE"/>
    <property type="match status" value="1"/>
</dbReference>
<dbReference type="Pfam" id="PF03129">
    <property type="entry name" value="HGTP_anticodon"/>
    <property type="match status" value="1"/>
</dbReference>
<dbReference type="Pfam" id="PF02824">
    <property type="entry name" value="TGS"/>
    <property type="match status" value="1"/>
</dbReference>
<dbReference type="Pfam" id="PF00587">
    <property type="entry name" value="tRNA-synt_2b"/>
    <property type="match status" value="1"/>
</dbReference>
<dbReference type="Pfam" id="PF07973">
    <property type="entry name" value="tRNA_SAD"/>
    <property type="match status" value="1"/>
</dbReference>
<dbReference type="PRINTS" id="PR01047">
    <property type="entry name" value="TRNASYNTHTHR"/>
</dbReference>
<dbReference type="SMART" id="SM00863">
    <property type="entry name" value="tRNA_SAD"/>
    <property type="match status" value="1"/>
</dbReference>
<dbReference type="SUPFAM" id="SSF52954">
    <property type="entry name" value="Class II aaRS ABD-related"/>
    <property type="match status" value="1"/>
</dbReference>
<dbReference type="SUPFAM" id="SSF55681">
    <property type="entry name" value="Class II aaRS and biotin synthetases"/>
    <property type="match status" value="1"/>
</dbReference>
<dbReference type="SUPFAM" id="SSF55186">
    <property type="entry name" value="ThrRS/AlaRS common domain"/>
    <property type="match status" value="1"/>
</dbReference>
<dbReference type="PROSITE" id="PS50862">
    <property type="entry name" value="AA_TRNA_LIGASE_II"/>
    <property type="match status" value="1"/>
</dbReference>
<dbReference type="PROSITE" id="PS51880">
    <property type="entry name" value="TGS"/>
    <property type="match status" value="1"/>
</dbReference>
<comment type="function">
    <text evidence="1">Catalyzes the attachment of threonine to tRNA(Thr) in a two-step reaction: L-threonine is first activated by ATP to form Thr-AMP and then transferred to the acceptor end of tRNA(Thr). Also edits incorrectly charged L-seryl-tRNA(Thr).</text>
</comment>
<comment type="catalytic activity">
    <reaction evidence="1">
        <text>tRNA(Thr) + L-threonine + ATP = L-threonyl-tRNA(Thr) + AMP + diphosphate + H(+)</text>
        <dbReference type="Rhea" id="RHEA:24624"/>
        <dbReference type="Rhea" id="RHEA-COMP:9670"/>
        <dbReference type="Rhea" id="RHEA-COMP:9704"/>
        <dbReference type="ChEBI" id="CHEBI:15378"/>
        <dbReference type="ChEBI" id="CHEBI:30616"/>
        <dbReference type="ChEBI" id="CHEBI:33019"/>
        <dbReference type="ChEBI" id="CHEBI:57926"/>
        <dbReference type="ChEBI" id="CHEBI:78442"/>
        <dbReference type="ChEBI" id="CHEBI:78534"/>
        <dbReference type="ChEBI" id="CHEBI:456215"/>
        <dbReference type="EC" id="6.1.1.3"/>
    </reaction>
</comment>
<comment type="cofactor">
    <cofactor evidence="1">
        <name>Zn(2+)</name>
        <dbReference type="ChEBI" id="CHEBI:29105"/>
    </cofactor>
    <text evidence="1">Binds 1 zinc ion per subunit.</text>
</comment>
<comment type="subunit">
    <text evidence="1">Homodimer.</text>
</comment>
<comment type="subcellular location">
    <subcellularLocation>
        <location evidence="1">Cytoplasm</location>
    </subcellularLocation>
</comment>
<comment type="similarity">
    <text evidence="1">Belongs to the class-II aminoacyl-tRNA synthetase family.</text>
</comment>
<keyword id="KW-0030">Aminoacyl-tRNA synthetase</keyword>
<keyword id="KW-0067">ATP-binding</keyword>
<keyword id="KW-0963">Cytoplasm</keyword>
<keyword id="KW-0436">Ligase</keyword>
<keyword id="KW-0479">Metal-binding</keyword>
<keyword id="KW-0547">Nucleotide-binding</keyword>
<keyword id="KW-0648">Protein biosynthesis</keyword>
<keyword id="KW-0694">RNA-binding</keyword>
<keyword id="KW-0820">tRNA-binding</keyword>
<keyword id="KW-0862">Zinc</keyword>